<protein>
    <recommendedName>
        <fullName>Mitogen-activated protein kinase kinase kinase 19</fullName>
        <ecNumber>2.7.11.1</ecNumber>
    </recommendedName>
    <alternativeName>
        <fullName>SPS1/STE20-related protein kinase YSK4</fullName>
    </alternativeName>
</protein>
<name>M3K19_MOUSE</name>
<feature type="chain" id="PRO_0000421022" description="Mitogen-activated protein kinase kinase kinase 19">
    <location>
        <begin position="1"/>
        <end position="1311"/>
    </location>
</feature>
<feature type="domain" description="Protein kinase" evidence="1">
    <location>
        <begin position="1044"/>
        <end position="1307"/>
    </location>
</feature>
<feature type="region of interest" description="Disordered" evidence="3">
    <location>
        <begin position="85"/>
        <end position="119"/>
    </location>
</feature>
<feature type="region of interest" description="Disordered" evidence="3">
    <location>
        <begin position="250"/>
        <end position="274"/>
    </location>
</feature>
<feature type="region of interest" description="Disordered" evidence="3">
    <location>
        <begin position="330"/>
        <end position="363"/>
    </location>
</feature>
<feature type="region of interest" description="Disordered" evidence="3">
    <location>
        <begin position="396"/>
        <end position="472"/>
    </location>
</feature>
<feature type="region of interest" description="Disordered" evidence="3">
    <location>
        <begin position="486"/>
        <end position="508"/>
    </location>
</feature>
<feature type="region of interest" description="Disordered" evidence="3">
    <location>
        <begin position="576"/>
        <end position="607"/>
    </location>
</feature>
<feature type="region of interest" description="Disordered" evidence="3">
    <location>
        <begin position="734"/>
        <end position="767"/>
    </location>
</feature>
<feature type="compositionally biased region" description="Polar residues" evidence="3">
    <location>
        <begin position="250"/>
        <end position="261"/>
    </location>
</feature>
<feature type="compositionally biased region" description="Basic and acidic residues" evidence="3">
    <location>
        <begin position="262"/>
        <end position="274"/>
    </location>
</feature>
<feature type="compositionally biased region" description="Basic and acidic residues" evidence="3">
    <location>
        <begin position="330"/>
        <end position="345"/>
    </location>
</feature>
<feature type="compositionally biased region" description="Basic and acidic residues" evidence="3">
    <location>
        <begin position="450"/>
        <end position="464"/>
    </location>
</feature>
<feature type="compositionally biased region" description="Basic and acidic residues" evidence="3">
    <location>
        <begin position="734"/>
        <end position="748"/>
    </location>
</feature>
<feature type="active site" description="Proton acceptor" evidence="1 2">
    <location>
        <position position="1169"/>
    </location>
</feature>
<feature type="binding site" evidence="1">
    <location>
        <begin position="1050"/>
        <end position="1058"/>
    </location>
    <ligand>
        <name>ATP</name>
        <dbReference type="ChEBI" id="CHEBI:30616"/>
    </ligand>
</feature>
<feature type="binding site" evidence="1">
    <location>
        <position position="1072"/>
    </location>
    <ligand>
        <name>ATP</name>
        <dbReference type="ChEBI" id="CHEBI:30616"/>
    </ligand>
</feature>
<keyword id="KW-0067">ATP-binding</keyword>
<keyword id="KW-0418">Kinase</keyword>
<keyword id="KW-0547">Nucleotide-binding</keyword>
<keyword id="KW-1185">Reference proteome</keyword>
<keyword id="KW-0723">Serine/threonine-protein kinase</keyword>
<keyword id="KW-0808">Transferase</keyword>
<organism>
    <name type="scientific">Mus musculus</name>
    <name type="common">Mouse</name>
    <dbReference type="NCBI Taxonomy" id="10090"/>
    <lineage>
        <taxon>Eukaryota</taxon>
        <taxon>Metazoa</taxon>
        <taxon>Chordata</taxon>
        <taxon>Craniata</taxon>
        <taxon>Vertebrata</taxon>
        <taxon>Euteleostomi</taxon>
        <taxon>Mammalia</taxon>
        <taxon>Eutheria</taxon>
        <taxon>Euarchontoglires</taxon>
        <taxon>Glires</taxon>
        <taxon>Rodentia</taxon>
        <taxon>Myomorpha</taxon>
        <taxon>Muroidea</taxon>
        <taxon>Muridae</taxon>
        <taxon>Murinae</taxon>
        <taxon>Mus</taxon>
        <taxon>Mus</taxon>
    </lineage>
</organism>
<reference key="1">
    <citation type="journal article" date="2009" name="PLoS Biol.">
        <title>Lineage-specific biology revealed by a finished genome assembly of the mouse.</title>
        <authorList>
            <person name="Church D.M."/>
            <person name="Goodstadt L."/>
            <person name="Hillier L.W."/>
            <person name="Zody M.C."/>
            <person name="Goldstein S."/>
            <person name="She X."/>
            <person name="Bult C.J."/>
            <person name="Agarwala R."/>
            <person name="Cherry J.L."/>
            <person name="DiCuccio M."/>
            <person name="Hlavina W."/>
            <person name="Kapustin Y."/>
            <person name="Meric P."/>
            <person name="Maglott D."/>
            <person name="Birtle Z."/>
            <person name="Marques A.C."/>
            <person name="Graves T."/>
            <person name="Zhou S."/>
            <person name="Teague B."/>
            <person name="Potamousis K."/>
            <person name="Churas C."/>
            <person name="Place M."/>
            <person name="Herschleb J."/>
            <person name="Runnheim R."/>
            <person name="Forrest D."/>
            <person name="Amos-Landgraf J."/>
            <person name="Schwartz D.C."/>
            <person name="Cheng Z."/>
            <person name="Lindblad-Toh K."/>
            <person name="Eichler E.E."/>
            <person name="Ponting C.P."/>
        </authorList>
    </citation>
    <scope>NUCLEOTIDE SEQUENCE [LARGE SCALE GENOMIC DNA]</scope>
    <source>
        <strain>C57BL/6J</strain>
    </source>
</reference>
<evidence type="ECO:0000255" key="1">
    <source>
        <dbReference type="PROSITE-ProRule" id="PRU00159"/>
    </source>
</evidence>
<evidence type="ECO:0000255" key="2">
    <source>
        <dbReference type="PROSITE-ProRule" id="PRU10027"/>
    </source>
</evidence>
<evidence type="ECO:0000256" key="3">
    <source>
        <dbReference type="SAM" id="MobiDB-lite"/>
    </source>
</evidence>
<evidence type="ECO:0000305" key="4"/>
<sequence>MDSMPRPERHAESLLDICHEAGSTPMEMTVSQTENLTLQSISSSEDFDLEDDFSPFILAREGAAPRGENWPRRTEGVEIIVTFPPDPLQEASQEDLKESNQVTSEHQEREQVHPVSPPDDAEMVGLTGRMLTTQPSLLKTDGSSEELCGVDVALSPPRPCLDSSLAASAAGEVAPCVLKEQQRQSDEFPTSDISYSSRRTGLPLPPLSCLPMRSCIFNMEKSPKSPRHRERKVPSLSLSVPKLLEPLSRPLSQSAEFSSSKNHQEVTQEGPVEHTLRGSNCTLWSRNMCSFRKSGKQGVAESWPSQEMEGWDKTKTSGFKEGPSLFSCESVKEDTTPTERERDSGYHVSEMQRGGEDSQYLSSRKKESWTARVVERDSGVEHPILCKLLEVSNSEMTPAEEKEIGNENVPDAKSNSVHKSGAMEPHAASEEVSVPKNGPSVNSDGPAEELEGHRDIEQNRKIPMEEETNPEMNGVVPLTHIAFPGEGTSKGPARAEPHLQRRKRPAQNSNSFNLLAHREHDKLQTNTHRTKLDSRTKARNRAPPNLMVSIQASIKPNMHKNSIKTQVFPALELIDHRPHPSSKFQRRAPLTEKKSTHQTQKPKKQAFPRIGKHAGIKKPGIPLSAETTDPRLHFLDLKYSDMFKEINSASNGPGIYEMFGTPVYCHIREAERHDHRCYREIRTAPSGRCVVNKCQSSESDRCSNSRARLLQKRQHIKPPKPLHGLRQKHRGFISKDKGCKDMGGHTEDSVSEPDGQMKSPGNDFLSSKDDAQLMHLIPIPELSPEQKAPAPVSDLSIVEEIFTEECADEEGILNDDSLTQSLGDLKEPEGLHPQAPLVPSENSWAVLSEKRSGKRVSPEKHNVEPLDKINAEQMFPGYLEFDSLSEKSKTLVSFSSCSFQENLERAPSPTEQHWARSLEQDSLENNSTTYQTFGKISQEILDPGKNEELTDELLGCLVEELLALDEKDNNSCQIMTNEADAKNLNLVFSRRGNTIEELGRETTDVKLQRCINGFRIYDEENFLTSNEKKTLSDKSLNHEEAIFWTKGEILGRGAYGTVYCGLTSLGQLIAVKQVALDTSDKLATEKEYRKLQEEVDLLKALKHVNIVAYLGTCLEENTLSIFMEFVPGGSISSIINRFGPLPEMVFCKYTRQILQGVAYLHDNCVVHRDIKGNNVMLMPTGIIKLIDFGCAKRLAWAGLNGTHSDMLKSMRGTPYWMAPEVINESGYGRKSDIWSIGCTVFEMATGKPPLASMDRMAAMFYIGAHRGLMPPLPARFSEPAADFVRLCLTRDQHERPSALQLLKHSFLKRSQ</sequence>
<accession>E9Q3S4</accession>
<proteinExistence type="inferred from homology"/>
<dbReference type="EC" id="2.7.11.1"/>
<dbReference type="EMBL" id="AC121883">
    <property type="status" value="NOT_ANNOTATED_CDS"/>
    <property type="molecule type" value="Genomic_DNA"/>
</dbReference>
<dbReference type="EMBL" id="AC163690">
    <property type="status" value="NOT_ANNOTATED_CDS"/>
    <property type="molecule type" value="Genomic_DNA"/>
</dbReference>
<dbReference type="RefSeq" id="NP_035867.1">
    <property type="nucleotide sequence ID" value="NM_011737.1"/>
</dbReference>
<dbReference type="SMR" id="E9Q3S4"/>
<dbReference type="BioGRID" id="204617">
    <property type="interactions" value="1"/>
</dbReference>
<dbReference type="FunCoup" id="E9Q3S4">
    <property type="interactions" value="318"/>
</dbReference>
<dbReference type="IntAct" id="E9Q3S4">
    <property type="interactions" value="1"/>
</dbReference>
<dbReference type="STRING" id="10090.ENSMUSP00000056254"/>
<dbReference type="GlyGen" id="E9Q3S4">
    <property type="glycosylation" value="2 sites, 1 O-linked glycan (2 sites)"/>
</dbReference>
<dbReference type="iPTMnet" id="E9Q3S4"/>
<dbReference type="PhosphoSitePlus" id="E9Q3S4"/>
<dbReference type="SwissPalm" id="E9Q3S4"/>
<dbReference type="PaxDb" id="10090-ENSMUSP00000056254"/>
<dbReference type="ProteomicsDB" id="292136"/>
<dbReference type="Antibodypedia" id="2102">
    <property type="antibodies" value="56 antibodies from 18 providers"/>
</dbReference>
<dbReference type="DNASU" id="22625"/>
<dbReference type="Ensembl" id="ENSMUST00000061512.5">
    <property type="protein sequence ID" value="ENSMUSP00000056254.3"/>
    <property type="gene ID" value="ENSMUSG00000051590.11"/>
</dbReference>
<dbReference type="GeneID" id="22625"/>
<dbReference type="KEGG" id="mmu:22625"/>
<dbReference type="UCSC" id="uc011wra.1">
    <property type="organism name" value="mouse"/>
</dbReference>
<dbReference type="AGR" id="MGI:1203481"/>
<dbReference type="CTD" id="80122"/>
<dbReference type="MGI" id="MGI:1203481">
    <property type="gene designation" value="Map3k19"/>
</dbReference>
<dbReference type="VEuPathDB" id="HostDB:ENSMUSG00000051590"/>
<dbReference type="eggNOG" id="KOG0198">
    <property type="taxonomic scope" value="Eukaryota"/>
</dbReference>
<dbReference type="GeneTree" id="ENSGT00940000160383"/>
<dbReference type="InParanoid" id="E9Q3S4"/>
<dbReference type="OMA" id="RNMCSFQ"/>
<dbReference type="PhylomeDB" id="E9Q3S4"/>
<dbReference type="TreeFam" id="TF332735"/>
<dbReference type="BioGRID-ORCS" id="22625">
    <property type="hits" value="4 hits in 79 CRISPR screens"/>
</dbReference>
<dbReference type="ChiTaRS" id="Map3k19">
    <property type="organism name" value="mouse"/>
</dbReference>
<dbReference type="PRO" id="PR:E9Q3S4"/>
<dbReference type="Proteomes" id="UP000000589">
    <property type="component" value="Chromosome 1"/>
</dbReference>
<dbReference type="RNAct" id="E9Q3S4">
    <property type="molecule type" value="protein"/>
</dbReference>
<dbReference type="Bgee" id="ENSMUSG00000051590">
    <property type="expression patterns" value="Expressed in fourth ventricle and 29 other cell types or tissues"/>
</dbReference>
<dbReference type="ExpressionAtlas" id="E9Q3S4">
    <property type="expression patterns" value="baseline and differential"/>
</dbReference>
<dbReference type="GO" id="GO:0005524">
    <property type="term" value="F:ATP binding"/>
    <property type="evidence" value="ECO:0007669"/>
    <property type="project" value="UniProtKB-KW"/>
</dbReference>
<dbReference type="GO" id="GO:0004709">
    <property type="term" value="F:MAP kinase kinase kinase activity"/>
    <property type="evidence" value="ECO:0007669"/>
    <property type="project" value="UniProtKB-ARBA"/>
</dbReference>
<dbReference type="GO" id="GO:0106310">
    <property type="term" value="F:protein serine kinase activity"/>
    <property type="evidence" value="ECO:0007669"/>
    <property type="project" value="RHEA"/>
</dbReference>
<dbReference type="CDD" id="cd06631">
    <property type="entry name" value="STKc_YSK4"/>
    <property type="match status" value="1"/>
</dbReference>
<dbReference type="FunFam" id="1.10.510.10:FF:000331">
    <property type="entry name" value="Mitogen-activated protein kinase kinase kinase 19"/>
    <property type="match status" value="1"/>
</dbReference>
<dbReference type="Gene3D" id="1.10.510.10">
    <property type="entry name" value="Transferase(Phosphotransferase) domain 1"/>
    <property type="match status" value="1"/>
</dbReference>
<dbReference type="InterPro" id="IPR011009">
    <property type="entry name" value="Kinase-like_dom_sf"/>
</dbReference>
<dbReference type="InterPro" id="IPR000719">
    <property type="entry name" value="Prot_kinase_dom"/>
</dbReference>
<dbReference type="InterPro" id="IPR017441">
    <property type="entry name" value="Protein_kinase_ATP_BS"/>
</dbReference>
<dbReference type="InterPro" id="IPR008271">
    <property type="entry name" value="Ser/Thr_kinase_AS"/>
</dbReference>
<dbReference type="PANTHER" id="PTHR11584:SF369">
    <property type="entry name" value="MITOGEN-ACTIVATED PROTEIN KINASE KINASE KINASE 19-RELATED"/>
    <property type="match status" value="1"/>
</dbReference>
<dbReference type="PANTHER" id="PTHR11584">
    <property type="entry name" value="SERINE/THREONINE PROTEIN KINASE"/>
    <property type="match status" value="1"/>
</dbReference>
<dbReference type="Pfam" id="PF00069">
    <property type="entry name" value="Pkinase"/>
    <property type="match status" value="1"/>
</dbReference>
<dbReference type="SMART" id="SM00220">
    <property type="entry name" value="S_TKc"/>
    <property type="match status" value="1"/>
</dbReference>
<dbReference type="SUPFAM" id="SSF56112">
    <property type="entry name" value="Protein kinase-like (PK-like)"/>
    <property type="match status" value="1"/>
</dbReference>
<dbReference type="PROSITE" id="PS00107">
    <property type="entry name" value="PROTEIN_KINASE_ATP"/>
    <property type="match status" value="1"/>
</dbReference>
<dbReference type="PROSITE" id="PS50011">
    <property type="entry name" value="PROTEIN_KINASE_DOM"/>
    <property type="match status" value="1"/>
</dbReference>
<dbReference type="PROSITE" id="PS00108">
    <property type="entry name" value="PROTEIN_KINASE_ST"/>
    <property type="match status" value="1"/>
</dbReference>
<gene>
    <name type="primary">Map3k19</name>
    <name type="synonym">Ysk4</name>
</gene>
<comment type="catalytic activity">
    <reaction>
        <text>L-seryl-[protein] + ATP = O-phospho-L-seryl-[protein] + ADP + H(+)</text>
        <dbReference type="Rhea" id="RHEA:17989"/>
        <dbReference type="Rhea" id="RHEA-COMP:9863"/>
        <dbReference type="Rhea" id="RHEA-COMP:11604"/>
        <dbReference type="ChEBI" id="CHEBI:15378"/>
        <dbReference type="ChEBI" id="CHEBI:29999"/>
        <dbReference type="ChEBI" id="CHEBI:30616"/>
        <dbReference type="ChEBI" id="CHEBI:83421"/>
        <dbReference type="ChEBI" id="CHEBI:456216"/>
        <dbReference type="EC" id="2.7.11.1"/>
    </reaction>
</comment>
<comment type="catalytic activity">
    <reaction>
        <text>L-threonyl-[protein] + ATP = O-phospho-L-threonyl-[protein] + ADP + H(+)</text>
        <dbReference type="Rhea" id="RHEA:46608"/>
        <dbReference type="Rhea" id="RHEA-COMP:11060"/>
        <dbReference type="Rhea" id="RHEA-COMP:11605"/>
        <dbReference type="ChEBI" id="CHEBI:15378"/>
        <dbReference type="ChEBI" id="CHEBI:30013"/>
        <dbReference type="ChEBI" id="CHEBI:30616"/>
        <dbReference type="ChEBI" id="CHEBI:61977"/>
        <dbReference type="ChEBI" id="CHEBI:456216"/>
        <dbReference type="EC" id="2.7.11.1"/>
    </reaction>
</comment>
<comment type="similarity">
    <text evidence="4">Belongs to the protein kinase superfamily. STE Ser/Thr protein kinase family. STE20 subfamily.</text>
</comment>